<reference key="1">
    <citation type="journal article" date="2000" name="Proc. Natl. Acad. Sci. U.S.A.">
        <title>Archaeal adaptation to higher temperatures revealed by genomic sequence of Thermoplasma volcanium.</title>
        <authorList>
            <person name="Kawashima T."/>
            <person name="Amano N."/>
            <person name="Koike H."/>
            <person name="Makino S."/>
            <person name="Higuchi S."/>
            <person name="Kawashima-Ohya Y."/>
            <person name="Watanabe K."/>
            <person name="Yamazaki M."/>
            <person name="Kanehori K."/>
            <person name="Kawamoto T."/>
            <person name="Nunoshiba T."/>
            <person name="Yamamoto Y."/>
            <person name="Aramaki H."/>
            <person name="Makino K."/>
            <person name="Suzuki M."/>
        </authorList>
    </citation>
    <scope>NUCLEOTIDE SEQUENCE [LARGE SCALE GENOMIC DNA]</scope>
    <source>
        <strain>ATCC 51530 / DSM 4299 / JCM 9571 / NBRC 15438 / GSS1</strain>
    </source>
</reference>
<proteinExistence type="inferred from homology"/>
<protein>
    <recommendedName>
        <fullName evidence="1">Large ribosomal subunit protein uL14</fullName>
    </recommendedName>
    <alternativeName>
        <fullName evidence="2">50S ribosomal protein L14</fullName>
    </alternativeName>
</protein>
<keyword id="KW-0687">Ribonucleoprotein</keyword>
<keyword id="KW-0689">Ribosomal protein</keyword>
<keyword id="KW-0694">RNA-binding</keyword>
<keyword id="KW-0699">rRNA-binding</keyword>
<organism>
    <name type="scientific">Thermoplasma volcanium (strain ATCC 51530 / DSM 4299 / JCM 9571 / NBRC 15438 / GSS1)</name>
    <dbReference type="NCBI Taxonomy" id="273116"/>
    <lineage>
        <taxon>Archaea</taxon>
        <taxon>Methanobacteriati</taxon>
        <taxon>Thermoplasmatota</taxon>
        <taxon>Thermoplasmata</taxon>
        <taxon>Thermoplasmatales</taxon>
        <taxon>Thermoplasmataceae</taxon>
        <taxon>Thermoplasma</taxon>
    </lineage>
</organism>
<accession>Q97BW6</accession>
<gene>
    <name evidence="1" type="primary">rpl14</name>
    <name type="ordered locus">TV0339</name>
    <name type="ORF">TVG0337944</name>
</gene>
<feature type="chain" id="PRO_0000266617" description="Large ribosomal subunit protein uL14">
    <location>
        <begin position="1"/>
        <end position="132"/>
    </location>
</feature>
<name>RL14_THEVO</name>
<dbReference type="EMBL" id="BA000011">
    <property type="protein sequence ID" value="BAB59481.1"/>
    <property type="molecule type" value="Genomic_DNA"/>
</dbReference>
<dbReference type="RefSeq" id="WP_010916593.1">
    <property type="nucleotide sequence ID" value="NC_002689.2"/>
</dbReference>
<dbReference type="SMR" id="Q97BW6"/>
<dbReference type="STRING" id="273116.gene:9381116"/>
<dbReference type="PaxDb" id="273116-14324554"/>
<dbReference type="GeneID" id="1440851"/>
<dbReference type="KEGG" id="tvo:TVG0337944"/>
<dbReference type="eggNOG" id="arCOG04095">
    <property type="taxonomic scope" value="Archaea"/>
</dbReference>
<dbReference type="HOGENOM" id="CLU_095071_3_0_2"/>
<dbReference type="OrthoDB" id="23569at2157"/>
<dbReference type="PhylomeDB" id="Q97BW6"/>
<dbReference type="Proteomes" id="UP000001017">
    <property type="component" value="Chromosome"/>
</dbReference>
<dbReference type="GO" id="GO:0022625">
    <property type="term" value="C:cytosolic large ribosomal subunit"/>
    <property type="evidence" value="ECO:0007669"/>
    <property type="project" value="TreeGrafter"/>
</dbReference>
<dbReference type="GO" id="GO:0070180">
    <property type="term" value="F:large ribosomal subunit rRNA binding"/>
    <property type="evidence" value="ECO:0007669"/>
    <property type="project" value="TreeGrafter"/>
</dbReference>
<dbReference type="GO" id="GO:0003735">
    <property type="term" value="F:structural constituent of ribosome"/>
    <property type="evidence" value="ECO:0007669"/>
    <property type="project" value="InterPro"/>
</dbReference>
<dbReference type="GO" id="GO:0006412">
    <property type="term" value="P:translation"/>
    <property type="evidence" value="ECO:0007669"/>
    <property type="project" value="UniProtKB-UniRule"/>
</dbReference>
<dbReference type="CDD" id="cd00337">
    <property type="entry name" value="Ribosomal_uL14"/>
    <property type="match status" value="1"/>
</dbReference>
<dbReference type="FunFam" id="2.40.150.20:FF:000007">
    <property type="entry name" value="50S ribosomal protein L14"/>
    <property type="match status" value="1"/>
</dbReference>
<dbReference type="Gene3D" id="2.40.150.20">
    <property type="entry name" value="Ribosomal protein L14"/>
    <property type="match status" value="1"/>
</dbReference>
<dbReference type="HAMAP" id="MF_01367">
    <property type="entry name" value="Ribosomal_uL14"/>
    <property type="match status" value="1"/>
</dbReference>
<dbReference type="InterPro" id="IPR000218">
    <property type="entry name" value="Ribosomal_uL14"/>
</dbReference>
<dbReference type="InterPro" id="IPR019971">
    <property type="entry name" value="Ribosomal_uL14_arc"/>
</dbReference>
<dbReference type="InterPro" id="IPR019972">
    <property type="entry name" value="Ribosomal_uL14_CS"/>
</dbReference>
<dbReference type="InterPro" id="IPR036853">
    <property type="entry name" value="Ribosomal_uL14_sf"/>
</dbReference>
<dbReference type="NCBIfam" id="NF006344">
    <property type="entry name" value="PRK08571.1"/>
    <property type="match status" value="1"/>
</dbReference>
<dbReference type="NCBIfam" id="TIGR03673">
    <property type="entry name" value="uL14_arch"/>
    <property type="match status" value="1"/>
</dbReference>
<dbReference type="PANTHER" id="PTHR11761">
    <property type="entry name" value="50S/60S RIBOSOMAL PROTEIN L14/L23"/>
    <property type="match status" value="1"/>
</dbReference>
<dbReference type="PANTHER" id="PTHR11761:SF8">
    <property type="entry name" value="LARGE RIBOSOMAL SUBUNIT PROTEIN UL14"/>
    <property type="match status" value="1"/>
</dbReference>
<dbReference type="Pfam" id="PF00238">
    <property type="entry name" value="Ribosomal_L14"/>
    <property type="match status" value="1"/>
</dbReference>
<dbReference type="SMART" id="SM01374">
    <property type="entry name" value="Ribosomal_L14"/>
    <property type="match status" value="1"/>
</dbReference>
<dbReference type="SUPFAM" id="SSF50193">
    <property type="entry name" value="Ribosomal protein L14"/>
    <property type="match status" value="1"/>
</dbReference>
<dbReference type="PROSITE" id="PS00049">
    <property type="entry name" value="RIBOSOMAL_L14"/>
    <property type="match status" value="1"/>
</dbReference>
<comment type="function">
    <text evidence="1">Binds to 23S rRNA. Forms part of two intersubunit bridges in the 70S ribosome.</text>
</comment>
<comment type="subunit">
    <text evidence="1">Part of the 50S ribosomal subunit. Forms a cluster with proteins L3 and L24e, part of which may contact the 16S rRNA in 2 intersubunit bridges.</text>
</comment>
<comment type="similarity">
    <text evidence="1">Belongs to the universal ribosomal protein uL14 family.</text>
</comment>
<evidence type="ECO:0000255" key="1">
    <source>
        <dbReference type="HAMAP-Rule" id="MF_01367"/>
    </source>
</evidence>
<evidence type="ECO:0000305" key="2"/>
<sequence length="132" mass="14196">MKGIAGREIRGLPLGANIVCADNTGARSISLIDVKAYHGKARRIPAAGVGDMFIASVKKGTPEMRSKVVYAVVIRQKRPYRRPDGTMVEFEDNAAVLVTPDGEVRGSEIKGPVAREAAERWPRIAAIASIIV</sequence>